<keyword id="KW-0597">Phosphoprotein</keyword>
<keyword id="KW-1185">Reference proteome</keyword>
<keyword id="KW-0677">Repeat</keyword>
<keyword id="KW-0853">WD repeat</keyword>
<reference key="1">
    <citation type="journal article" date="2002" name="Nature">
        <title>The genome sequence of Schizosaccharomyces pombe.</title>
        <authorList>
            <person name="Wood V."/>
            <person name="Gwilliam R."/>
            <person name="Rajandream M.A."/>
            <person name="Lyne M.H."/>
            <person name="Lyne R."/>
            <person name="Stewart A."/>
            <person name="Sgouros J.G."/>
            <person name="Peat N."/>
            <person name="Hayles J."/>
            <person name="Baker S.G."/>
            <person name="Basham D."/>
            <person name="Bowman S."/>
            <person name="Brooks K."/>
            <person name="Brown D."/>
            <person name="Brown S."/>
            <person name="Chillingworth T."/>
            <person name="Churcher C.M."/>
            <person name="Collins M."/>
            <person name="Connor R."/>
            <person name="Cronin A."/>
            <person name="Davis P."/>
            <person name="Feltwell T."/>
            <person name="Fraser A."/>
            <person name="Gentles S."/>
            <person name="Goble A."/>
            <person name="Hamlin N."/>
            <person name="Harris D.E."/>
            <person name="Hidalgo J."/>
            <person name="Hodgson G."/>
            <person name="Holroyd S."/>
            <person name="Hornsby T."/>
            <person name="Howarth S."/>
            <person name="Huckle E.J."/>
            <person name="Hunt S."/>
            <person name="Jagels K."/>
            <person name="James K.D."/>
            <person name="Jones L."/>
            <person name="Jones M."/>
            <person name="Leather S."/>
            <person name="McDonald S."/>
            <person name="McLean J."/>
            <person name="Mooney P."/>
            <person name="Moule S."/>
            <person name="Mungall K.L."/>
            <person name="Murphy L.D."/>
            <person name="Niblett D."/>
            <person name="Odell C."/>
            <person name="Oliver K."/>
            <person name="O'Neil S."/>
            <person name="Pearson D."/>
            <person name="Quail M.A."/>
            <person name="Rabbinowitsch E."/>
            <person name="Rutherford K.M."/>
            <person name="Rutter S."/>
            <person name="Saunders D."/>
            <person name="Seeger K."/>
            <person name="Sharp S."/>
            <person name="Skelton J."/>
            <person name="Simmonds M.N."/>
            <person name="Squares R."/>
            <person name="Squares S."/>
            <person name="Stevens K."/>
            <person name="Taylor K."/>
            <person name="Taylor R.G."/>
            <person name="Tivey A."/>
            <person name="Walsh S.V."/>
            <person name="Warren T."/>
            <person name="Whitehead S."/>
            <person name="Woodward J.R."/>
            <person name="Volckaert G."/>
            <person name="Aert R."/>
            <person name="Robben J."/>
            <person name="Grymonprez B."/>
            <person name="Weltjens I."/>
            <person name="Vanstreels E."/>
            <person name="Rieger M."/>
            <person name="Schaefer M."/>
            <person name="Mueller-Auer S."/>
            <person name="Gabel C."/>
            <person name="Fuchs M."/>
            <person name="Duesterhoeft A."/>
            <person name="Fritzc C."/>
            <person name="Holzer E."/>
            <person name="Moestl D."/>
            <person name="Hilbert H."/>
            <person name="Borzym K."/>
            <person name="Langer I."/>
            <person name="Beck A."/>
            <person name="Lehrach H."/>
            <person name="Reinhardt R."/>
            <person name="Pohl T.M."/>
            <person name="Eger P."/>
            <person name="Zimmermann W."/>
            <person name="Wedler H."/>
            <person name="Wambutt R."/>
            <person name="Purnelle B."/>
            <person name="Goffeau A."/>
            <person name="Cadieu E."/>
            <person name="Dreano S."/>
            <person name="Gloux S."/>
            <person name="Lelaure V."/>
            <person name="Mottier S."/>
            <person name="Galibert F."/>
            <person name="Aves S.J."/>
            <person name="Xiang Z."/>
            <person name="Hunt C."/>
            <person name="Moore K."/>
            <person name="Hurst S.M."/>
            <person name="Lucas M."/>
            <person name="Rochet M."/>
            <person name="Gaillardin C."/>
            <person name="Tallada V.A."/>
            <person name="Garzon A."/>
            <person name="Thode G."/>
            <person name="Daga R.R."/>
            <person name="Cruzado L."/>
            <person name="Jimenez J."/>
            <person name="Sanchez M."/>
            <person name="del Rey F."/>
            <person name="Benito J."/>
            <person name="Dominguez A."/>
            <person name="Revuelta J.L."/>
            <person name="Moreno S."/>
            <person name="Armstrong J."/>
            <person name="Forsburg S.L."/>
            <person name="Cerutti L."/>
            <person name="Lowe T."/>
            <person name="McCombie W.R."/>
            <person name="Paulsen I."/>
            <person name="Potashkin J."/>
            <person name="Shpakovski G.V."/>
            <person name="Ussery D."/>
            <person name="Barrell B.G."/>
            <person name="Nurse P."/>
        </authorList>
    </citation>
    <scope>NUCLEOTIDE SEQUENCE [LARGE SCALE GENOMIC DNA]</scope>
    <source>
        <strain>972 / ATCC 24843</strain>
    </source>
</reference>
<reference key="2">
    <citation type="journal article" date="2008" name="J. Proteome Res.">
        <title>Phosphoproteome analysis of fission yeast.</title>
        <authorList>
            <person name="Wilson-Grady J.T."/>
            <person name="Villen J."/>
            <person name="Gygi S.P."/>
        </authorList>
    </citation>
    <scope>PHOSPHORYLATION [LARGE SCALE ANALYSIS] AT THR-640 AND SER-645</scope>
    <scope>IDENTIFICATION BY MASS SPECTROMETRY</scope>
</reference>
<organism>
    <name type="scientific">Schizosaccharomyces pombe (strain 972 / ATCC 24843)</name>
    <name type="common">Fission yeast</name>
    <dbReference type="NCBI Taxonomy" id="284812"/>
    <lineage>
        <taxon>Eukaryota</taxon>
        <taxon>Fungi</taxon>
        <taxon>Dikarya</taxon>
        <taxon>Ascomycota</taxon>
        <taxon>Taphrinomycotina</taxon>
        <taxon>Schizosaccharomycetes</taxon>
        <taxon>Schizosaccharomycetales</taxon>
        <taxon>Schizosaccharomycetaceae</taxon>
        <taxon>Schizosaccharomyces</taxon>
    </lineage>
</organism>
<accession>Q9C1X1</accession>
<feature type="chain" id="PRO_0000051178" description="Periodic tryptophan protein 2 homolog">
    <location>
        <begin position="1"/>
        <end position="854"/>
    </location>
</feature>
<feature type="repeat" description="WD 1">
    <location>
        <begin position="9"/>
        <end position="52"/>
    </location>
</feature>
<feature type="repeat" description="WD 2">
    <location>
        <begin position="53"/>
        <end position="93"/>
    </location>
</feature>
<feature type="repeat" description="WD 3">
    <location>
        <begin position="94"/>
        <end position="132"/>
    </location>
</feature>
<feature type="repeat" description="WD 4">
    <location>
        <begin position="144"/>
        <end position="183"/>
    </location>
</feature>
<feature type="repeat" description="WD 5">
    <location>
        <begin position="188"/>
        <end position="227"/>
    </location>
</feature>
<feature type="repeat" description="WD 6">
    <location>
        <begin position="252"/>
        <end position="291"/>
    </location>
</feature>
<feature type="repeat" description="WD 7">
    <location>
        <begin position="294"/>
        <end position="334"/>
    </location>
</feature>
<feature type="repeat" description="WD 8">
    <location>
        <begin position="337"/>
        <end position="376"/>
    </location>
</feature>
<feature type="repeat" description="WD 9">
    <location>
        <begin position="379"/>
        <end position="418"/>
    </location>
</feature>
<feature type="repeat" description="WD 10">
    <location>
        <begin position="422"/>
        <end position="464"/>
    </location>
</feature>
<feature type="repeat" description="WD 11">
    <location>
        <begin position="465"/>
        <end position="504"/>
    </location>
</feature>
<feature type="repeat" description="WD 12">
    <location>
        <begin position="507"/>
        <end position="546"/>
    </location>
</feature>
<feature type="repeat" description="WD 13">
    <location>
        <begin position="569"/>
        <end position="608"/>
    </location>
</feature>
<feature type="repeat" description="WD 14">
    <location>
        <begin position="668"/>
        <end position="709"/>
    </location>
</feature>
<feature type="modified residue" description="Phosphothreonine" evidence="1">
    <location>
        <position position="640"/>
    </location>
</feature>
<feature type="modified residue" description="Phosphoserine" evidence="1">
    <location>
        <position position="645"/>
    </location>
</feature>
<proteinExistence type="evidence at protein level"/>
<comment type="similarity">
    <text evidence="2">Belongs to the WD repeat PWP2 family.</text>
</comment>
<name>PWP2_SCHPO</name>
<evidence type="ECO:0000269" key="1">
    <source>
    </source>
</evidence>
<evidence type="ECO:0000305" key="2"/>
<protein>
    <recommendedName>
        <fullName>Periodic tryptophan protein 2 homolog</fullName>
    </recommendedName>
</protein>
<sequence length="854" mass="95441">MKTEFGFSNLVGTIFSKGNLVFTPDGFSILSPVGNRVSVYNLKDNTSYTFPFENHKNISHIALSPTSTLLLSVDEEGRCILCNFLRRSVLHYFNFKSPVGAIEFSPNGKFFAVSLGKLIQVWRTPNSLEEREFAPFVLHREYTGHFDDIVSISWSADSRFFISTSKDLTARLHSVDPIEGFHPCALTGHKNTVVSGFFSKDQQTIYTVSKDGALFVWKYSPLFQAGEVIDEEAEENKTRTHIWLIKERHYFNQNSKLRCAAFHPTSNLLVVGFSSGLFGIYELPSFTMLYQLSITQSNIDTLTVNSTGDWIAIGSSKLGQLLVWEWQSESYVLKQQSHYDALSTLQYSSDGQRIITGADDGKIKVWDMNSGFCIVTFTQHTSAVSGLCFSKRGNVLFSSSLDGSVRAWDLIRYRNFRTFTAPSRVQFSCIAVDPSGEIVCAGSQDSFEIFMWSVQTGQLLETLAGHEGPVSSLSFNSSGSLLASGSWDKTVRIWDIFSRSGIVEPLPIPSDVLSLAFHPDGKEVCVASLDGQLTFWNVQEGKQTSLIDGRKDLSGGRRFDDARTAENSSLNKTFTSICYSADGSCVLSAGTSKYVCLYDIITGVLIKKFQLSKNESLQGVQEMLNSRKMTEAGSIELIDTQGEESDLEDRIDRTLPGARRGDLSARKTRPEIICHGVQFSPSGGAFAAATTEGLMIYSLYNDFLFDPINLDMDITPSTTLTMCAEGEFLISLVMALRLNEYKVVQKVYESIPITDVEHVVQELPVSYLANFMGYLSSFAAETPHIEFHLRWMKSVLTYHGEYLRRKNFEFASQLTSLQKSIVVLSKRLSQLSSNNEFQLSFLLDKMHLRLENTA</sequence>
<dbReference type="EMBL" id="CU329671">
    <property type="protein sequence ID" value="CAC22605.1"/>
    <property type="molecule type" value="Genomic_DNA"/>
</dbReference>
<dbReference type="SMR" id="Q9C1X1"/>
<dbReference type="BioGRID" id="277696">
    <property type="interactions" value="3"/>
</dbReference>
<dbReference type="FunCoup" id="Q9C1X1">
    <property type="interactions" value="449"/>
</dbReference>
<dbReference type="STRING" id="284812.Q9C1X1"/>
<dbReference type="iPTMnet" id="Q9C1X1"/>
<dbReference type="PaxDb" id="4896-SPBC713.04c.1"/>
<dbReference type="EnsemblFungi" id="SPBC713.04c.1">
    <property type="protein sequence ID" value="SPBC713.04c.1:pep"/>
    <property type="gene ID" value="SPBC713.04c"/>
</dbReference>
<dbReference type="KEGG" id="spo:2541182"/>
<dbReference type="PomBase" id="SPBC713.04c"/>
<dbReference type="VEuPathDB" id="FungiDB:SPBC713.04c"/>
<dbReference type="eggNOG" id="KOG0291">
    <property type="taxonomic scope" value="Eukaryota"/>
</dbReference>
<dbReference type="HOGENOM" id="CLU_010458_0_0_1"/>
<dbReference type="InParanoid" id="Q9C1X1"/>
<dbReference type="OMA" id="VYEWQSE"/>
<dbReference type="PhylomeDB" id="Q9C1X1"/>
<dbReference type="Reactome" id="R-SPO-6791226">
    <property type="pathway name" value="Major pathway of rRNA processing in the nucleolus and cytosol"/>
</dbReference>
<dbReference type="PRO" id="PR:Q9C1X1"/>
<dbReference type="Proteomes" id="UP000002485">
    <property type="component" value="Chromosome II"/>
</dbReference>
<dbReference type="GO" id="GO:0005829">
    <property type="term" value="C:cytosol"/>
    <property type="evidence" value="ECO:0007005"/>
    <property type="project" value="PomBase"/>
</dbReference>
<dbReference type="GO" id="GO:0005730">
    <property type="term" value="C:nucleolus"/>
    <property type="evidence" value="ECO:0007005"/>
    <property type="project" value="PomBase"/>
</dbReference>
<dbReference type="GO" id="GO:0034388">
    <property type="term" value="C:Pwp2p-containing subcomplex of 90S preribosome"/>
    <property type="evidence" value="ECO:0000318"/>
    <property type="project" value="GO_Central"/>
</dbReference>
<dbReference type="GO" id="GO:0032040">
    <property type="term" value="C:small-subunit processome"/>
    <property type="evidence" value="ECO:0000314"/>
    <property type="project" value="PomBase"/>
</dbReference>
<dbReference type="GO" id="GO:0005732">
    <property type="term" value="C:sno(s)RNA-containing ribonucleoprotein complex"/>
    <property type="evidence" value="ECO:0000266"/>
    <property type="project" value="PomBase"/>
</dbReference>
<dbReference type="GO" id="GO:0030515">
    <property type="term" value="F:snoRNA binding"/>
    <property type="evidence" value="ECO:0000266"/>
    <property type="project" value="PomBase"/>
</dbReference>
<dbReference type="GO" id="GO:0000462">
    <property type="term" value="P:maturation of SSU-rRNA from tricistronic rRNA transcript (SSU-rRNA, 5.8S rRNA, LSU-rRNA)"/>
    <property type="evidence" value="ECO:0000318"/>
    <property type="project" value="GO_Central"/>
</dbReference>
<dbReference type="GO" id="GO:0000028">
    <property type="term" value="P:ribosomal small subunit assembly"/>
    <property type="evidence" value="ECO:0000318"/>
    <property type="project" value="GO_Central"/>
</dbReference>
<dbReference type="CDD" id="cd00200">
    <property type="entry name" value="WD40"/>
    <property type="match status" value="1"/>
</dbReference>
<dbReference type="FunFam" id="2.130.10.10:FF:000602">
    <property type="entry name" value="Periodic tryptophan protein 2"/>
    <property type="match status" value="1"/>
</dbReference>
<dbReference type="Gene3D" id="2.130.10.10">
    <property type="entry name" value="YVTN repeat-like/Quinoprotein amine dehydrogenase"/>
    <property type="match status" value="3"/>
</dbReference>
<dbReference type="InterPro" id="IPR020472">
    <property type="entry name" value="G-protein_beta_WD-40_rep"/>
</dbReference>
<dbReference type="InterPro" id="IPR027145">
    <property type="entry name" value="PWP2"/>
</dbReference>
<dbReference type="InterPro" id="IPR011044">
    <property type="entry name" value="Quino_amine_DH_bsu"/>
</dbReference>
<dbReference type="InterPro" id="IPR007148">
    <property type="entry name" value="SSU_processome_Utp12"/>
</dbReference>
<dbReference type="InterPro" id="IPR015943">
    <property type="entry name" value="WD40/YVTN_repeat-like_dom_sf"/>
</dbReference>
<dbReference type="InterPro" id="IPR019775">
    <property type="entry name" value="WD40_repeat_CS"/>
</dbReference>
<dbReference type="InterPro" id="IPR036322">
    <property type="entry name" value="WD40_repeat_dom_sf"/>
</dbReference>
<dbReference type="InterPro" id="IPR001680">
    <property type="entry name" value="WD40_rpt"/>
</dbReference>
<dbReference type="PANTHER" id="PTHR19858:SF0">
    <property type="entry name" value="PERIODIC TRYPTOPHAN PROTEIN 2 HOMOLOG"/>
    <property type="match status" value="1"/>
</dbReference>
<dbReference type="PANTHER" id="PTHR19858">
    <property type="entry name" value="WD40 REPEAT PROTEIN"/>
    <property type="match status" value="1"/>
</dbReference>
<dbReference type="Pfam" id="PF04003">
    <property type="entry name" value="Utp12"/>
    <property type="match status" value="1"/>
</dbReference>
<dbReference type="Pfam" id="PF00400">
    <property type="entry name" value="WD40"/>
    <property type="match status" value="6"/>
</dbReference>
<dbReference type="PRINTS" id="PR00320">
    <property type="entry name" value="GPROTEINBRPT"/>
</dbReference>
<dbReference type="SMART" id="SM00320">
    <property type="entry name" value="WD40"/>
    <property type="match status" value="12"/>
</dbReference>
<dbReference type="SUPFAM" id="SSF82171">
    <property type="entry name" value="DPP6 N-terminal domain-like"/>
    <property type="match status" value="1"/>
</dbReference>
<dbReference type="SUPFAM" id="SSF50978">
    <property type="entry name" value="WD40 repeat-like"/>
    <property type="match status" value="1"/>
</dbReference>
<dbReference type="SUPFAM" id="SSF50969">
    <property type="entry name" value="YVTN repeat-like/Quinoprotein amine dehydrogenase"/>
    <property type="match status" value="1"/>
</dbReference>
<dbReference type="PROSITE" id="PS00678">
    <property type="entry name" value="WD_REPEATS_1"/>
    <property type="match status" value="3"/>
</dbReference>
<dbReference type="PROSITE" id="PS50082">
    <property type="entry name" value="WD_REPEATS_2"/>
    <property type="match status" value="6"/>
</dbReference>
<dbReference type="PROSITE" id="PS50294">
    <property type="entry name" value="WD_REPEATS_REGION"/>
    <property type="match status" value="1"/>
</dbReference>
<gene>
    <name type="ORF">SPBC713.04c</name>
</gene>